<feature type="chain" id="PRO_0000202826" description="Putative uncharacterized protein YGR137W">
    <location>
        <begin position="1"/>
        <end position="124"/>
    </location>
</feature>
<feature type="transmembrane region" description="Helical" evidence="1">
    <location>
        <begin position="70"/>
        <end position="90"/>
    </location>
</feature>
<dbReference type="EMBL" id="Z72921">
    <property type="protein sequence ID" value="CAA97150.1"/>
    <property type="molecule type" value="Genomic_DNA"/>
</dbReference>
<dbReference type="PIR" id="S64446">
    <property type="entry name" value="S64446"/>
</dbReference>
<dbReference type="SMR" id="P53282"/>
<dbReference type="PaxDb" id="4932-YGR137W"/>
<dbReference type="EnsemblFungi" id="YGR137W_mRNA">
    <property type="protein sequence ID" value="YGR137W"/>
    <property type="gene ID" value="YGR137W"/>
</dbReference>
<dbReference type="AGR" id="SGD:S000003369"/>
<dbReference type="SGD" id="S000003369">
    <property type="gene designation" value="YGR137W"/>
</dbReference>
<dbReference type="HOGENOM" id="CLU_2005688_0_0_1"/>
<dbReference type="GO" id="GO:0016020">
    <property type="term" value="C:membrane"/>
    <property type="evidence" value="ECO:0007669"/>
    <property type="project" value="UniProtKB-SubCell"/>
</dbReference>
<sequence>MHLQPVICKLRLHSNSRRLYHILHLSLITINSLSNSTHHLHSKHRWKHNRNRAVGLVVPSRVLVANWEMLLYLALVLLLVVILSTAFFSILSRNICFSDLNLPNDFRSLKERKTHTEYGYVMVA</sequence>
<comment type="subcellular location">
    <subcellularLocation>
        <location evidence="2">Membrane</location>
        <topology evidence="2">Single-pass membrane protein</topology>
    </subcellularLocation>
</comment>
<comment type="miscellaneous">
    <text evidence="2">Partially overlaps LSB1.</text>
</comment>
<comment type="caution">
    <text evidence="3">Product of a dubious gene prediction unlikely to encode a functional protein. Because of that it is not part of the S.cerevisiae S288c complete/reference proteome set.</text>
</comment>
<protein>
    <recommendedName>
        <fullName>Putative uncharacterized protein YGR137W</fullName>
    </recommendedName>
</protein>
<accession>P53282</accession>
<name>YG3E_YEAST</name>
<proteinExistence type="uncertain"/>
<keyword id="KW-0472">Membrane</keyword>
<keyword id="KW-0812">Transmembrane</keyword>
<keyword id="KW-1133">Transmembrane helix</keyword>
<organism>
    <name type="scientific">Saccharomyces cerevisiae (strain ATCC 204508 / S288c)</name>
    <name type="common">Baker's yeast</name>
    <dbReference type="NCBI Taxonomy" id="559292"/>
    <lineage>
        <taxon>Eukaryota</taxon>
        <taxon>Fungi</taxon>
        <taxon>Dikarya</taxon>
        <taxon>Ascomycota</taxon>
        <taxon>Saccharomycotina</taxon>
        <taxon>Saccharomycetes</taxon>
        <taxon>Saccharomycetales</taxon>
        <taxon>Saccharomycetaceae</taxon>
        <taxon>Saccharomyces</taxon>
    </lineage>
</organism>
<evidence type="ECO:0000255" key="1"/>
<evidence type="ECO:0000305" key="2"/>
<evidence type="ECO:0000305" key="3">
    <source>
    </source>
</evidence>
<gene>
    <name type="ordered locus">YGR137W</name>
</gene>
<reference key="1">
    <citation type="journal article" date="1997" name="Nature">
        <title>The nucleotide sequence of Saccharomyces cerevisiae chromosome VII.</title>
        <authorList>
            <person name="Tettelin H."/>
            <person name="Agostoni-Carbone M.L."/>
            <person name="Albermann K."/>
            <person name="Albers M."/>
            <person name="Arroyo J."/>
            <person name="Backes U."/>
            <person name="Barreiros T."/>
            <person name="Bertani I."/>
            <person name="Bjourson A.J."/>
            <person name="Brueckner M."/>
            <person name="Bruschi C.V."/>
            <person name="Carignani G."/>
            <person name="Castagnoli L."/>
            <person name="Cerdan E."/>
            <person name="Clemente M.L."/>
            <person name="Coblenz A."/>
            <person name="Coglievina M."/>
            <person name="Coissac E."/>
            <person name="Defoor E."/>
            <person name="Del Bino S."/>
            <person name="Delius H."/>
            <person name="Delneri D."/>
            <person name="de Wergifosse P."/>
            <person name="Dujon B."/>
            <person name="Durand P."/>
            <person name="Entian K.-D."/>
            <person name="Eraso P."/>
            <person name="Escribano V."/>
            <person name="Fabiani L."/>
            <person name="Fartmann B."/>
            <person name="Feroli F."/>
            <person name="Feuermann M."/>
            <person name="Frontali L."/>
            <person name="Garcia-Gonzalez M."/>
            <person name="Garcia-Saez M.I."/>
            <person name="Goffeau A."/>
            <person name="Guerreiro P."/>
            <person name="Hani J."/>
            <person name="Hansen M."/>
            <person name="Hebling U."/>
            <person name="Hernandez K."/>
            <person name="Heumann K."/>
            <person name="Hilger F."/>
            <person name="Hofmann B."/>
            <person name="Indge K.J."/>
            <person name="James C.M."/>
            <person name="Klima R."/>
            <person name="Koetter P."/>
            <person name="Kramer B."/>
            <person name="Kramer W."/>
            <person name="Lauquin G."/>
            <person name="Leuther H."/>
            <person name="Louis E.J."/>
            <person name="Maillier E."/>
            <person name="Marconi A."/>
            <person name="Martegani E."/>
            <person name="Mazon M.J."/>
            <person name="Mazzoni C."/>
            <person name="McReynolds A.D.K."/>
            <person name="Melchioretto P."/>
            <person name="Mewes H.-W."/>
            <person name="Minenkova O."/>
            <person name="Mueller-Auer S."/>
            <person name="Nawrocki A."/>
            <person name="Netter P."/>
            <person name="Neu R."/>
            <person name="Nombela C."/>
            <person name="Oliver S.G."/>
            <person name="Panzeri L."/>
            <person name="Paoluzi S."/>
            <person name="Plevani P."/>
            <person name="Portetelle D."/>
            <person name="Portillo F."/>
            <person name="Potier S."/>
            <person name="Purnelle B."/>
            <person name="Rieger M."/>
            <person name="Riles L."/>
            <person name="Rinaldi T."/>
            <person name="Robben J."/>
            <person name="Rodrigues-Pousada C."/>
            <person name="Rodriguez-Belmonte E."/>
            <person name="Rodriguez-Torres A.M."/>
            <person name="Rose M."/>
            <person name="Ruzzi M."/>
            <person name="Saliola M."/>
            <person name="Sanchez-Perez M."/>
            <person name="Schaefer B."/>
            <person name="Schaefer M."/>
            <person name="Scharfe M."/>
            <person name="Schmidheini T."/>
            <person name="Schreer A."/>
            <person name="Skala J."/>
            <person name="Souciet J.-L."/>
            <person name="Steensma H.Y."/>
            <person name="Talla E."/>
            <person name="Thierry A."/>
            <person name="Vandenbol M."/>
            <person name="van der Aart Q.J.M."/>
            <person name="Van Dyck L."/>
            <person name="Vanoni M."/>
            <person name="Verhasselt P."/>
            <person name="Voet M."/>
            <person name="Volckaert G."/>
            <person name="Wambutt R."/>
            <person name="Watson M.D."/>
            <person name="Weber N."/>
            <person name="Wedler E."/>
            <person name="Wedler H."/>
            <person name="Wipfli P."/>
            <person name="Wolf K."/>
            <person name="Wright L.F."/>
            <person name="Zaccaria P."/>
            <person name="Zimmermann M."/>
            <person name="Zollner A."/>
            <person name="Kleine K."/>
        </authorList>
    </citation>
    <scope>NUCLEOTIDE SEQUENCE [LARGE SCALE GENOMIC DNA]</scope>
    <source>
        <strain>ATCC 204508 / S288c</strain>
    </source>
</reference>
<reference key="2">
    <citation type="journal article" date="2014" name="G3 (Bethesda)">
        <title>The reference genome sequence of Saccharomyces cerevisiae: Then and now.</title>
        <authorList>
            <person name="Engel S.R."/>
            <person name="Dietrich F.S."/>
            <person name="Fisk D.G."/>
            <person name="Binkley G."/>
            <person name="Balakrishnan R."/>
            <person name="Costanzo M.C."/>
            <person name="Dwight S.S."/>
            <person name="Hitz B.C."/>
            <person name="Karra K."/>
            <person name="Nash R.S."/>
            <person name="Weng S."/>
            <person name="Wong E.D."/>
            <person name="Lloyd P."/>
            <person name="Skrzypek M.S."/>
            <person name="Miyasato S.R."/>
            <person name="Simison M."/>
            <person name="Cherry J.M."/>
        </authorList>
    </citation>
    <scope>GENOME REANNOTATION</scope>
    <source>
        <strain>ATCC 204508 / S288c</strain>
    </source>
</reference>